<evidence type="ECO:0000255" key="1">
    <source>
        <dbReference type="HAMAP-Rule" id="MF_01666"/>
    </source>
</evidence>
<protein>
    <recommendedName>
        <fullName evidence="1">Glyoxylate/hydroxypyruvate reductase A</fullName>
        <ecNumber evidence="1">1.1.1.79</ecNumber>
        <ecNumber evidence="1">1.1.1.81</ecNumber>
    </recommendedName>
    <alternativeName>
        <fullName evidence="1">2-ketoacid reductase</fullName>
    </alternativeName>
</protein>
<proteinExistence type="inferred from homology"/>
<gene>
    <name evidence="1" type="primary">ghrA</name>
    <name type="ordered locus">ECUMN_1207</name>
</gene>
<name>GHRA_ECOLU</name>
<reference key="1">
    <citation type="journal article" date="2009" name="PLoS Genet.">
        <title>Organised genome dynamics in the Escherichia coli species results in highly diverse adaptive paths.</title>
        <authorList>
            <person name="Touchon M."/>
            <person name="Hoede C."/>
            <person name="Tenaillon O."/>
            <person name="Barbe V."/>
            <person name="Baeriswyl S."/>
            <person name="Bidet P."/>
            <person name="Bingen E."/>
            <person name="Bonacorsi S."/>
            <person name="Bouchier C."/>
            <person name="Bouvet O."/>
            <person name="Calteau A."/>
            <person name="Chiapello H."/>
            <person name="Clermont O."/>
            <person name="Cruveiller S."/>
            <person name="Danchin A."/>
            <person name="Diard M."/>
            <person name="Dossat C."/>
            <person name="Karoui M.E."/>
            <person name="Frapy E."/>
            <person name="Garry L."/>
            <person name="Ghigo J.M."/>
            <person name="Gilles A.M."/>
            <person name="Johnson J."/>
            <person name="Le Bouguenec C."/>
            <person name="Lescat M."/>
            <person name="Mangenot S."/>
            <person name="Martinez-Jehanne V."/>
            <person name="Matic I."/>
            <person name="Nassif X."/>
            <person name="Oztas S."/>
            <person name="Petit M.A."/>
            <person name="Pichon C."/>
            <person name="Rouy Z."/>
            <person name="Ruf C.S."/>
            <person name="Schneider D."/>
            <person name="Tourret J."/>
            <person name="Vacherie B."/>
            <person name="Vallenet D."/>
            <person name="Medigue C."/>
            <person name="Rocha E.P.C."/>
            <person name="Denamur E."/>
        </authorList>
    </citation>
    <scope>NUCLEOTIDE SEQUENCE [LARGE SCALE GENOMIC DNA]</scope>
    <source>
        <strain>UMN026 / ExPEC</strain>
    </source>
</reference>
<accession>B7N3I0</accession>
<dbReference type="EC" id="1.1.1.79" evidence="1"/>
<dbReference type="EC" id="1.1.1.81" evidence="1"/>
<dbReference type="EMBL" id="CU928163">
    <property type="protein sequence ID" value="CAR12416.1"/>
    <property type="molecule type" value="Genomic_DNA"/>
</dbReference>
<dbReference type="RefSeq" id="WP_000351283.1">
    <property type="nucleotide sequence ID" value="NC_011751.1"/>
</dbReference>
<dbReference type="RefSeq" id="YP_002411960.1">
    <property type="nucleotide sequence ID" value="NC_011751.1"/>
</dbReference>
<dbReference type="SMR" id="B7N3I0"/>
<dbReference type="STRING" id="585056.ECUMN_1207"/>
<dbReference type="KEGG" id="eum:ECUMN_1207"/>
<dbReference type="PATRIC" id="fig|585056.7.peg.1406"/>
<dbReference type="HOGENOM" id="CLU_019796_1_0_6"/>
<dbReference type="Proteomes" id="UP000007097">
    <property type="component" value="Chromosome"/>
</dbReference>
<dbReference type="GO" id="GO:0005829">
    <property type="term" value="C:cytosol"/>
    <property type="evidence" value="ECO:0007669"/>
    <property type="project" value="UniProtKB-ARBA"/>
</dbReference>
<dbReference type="GO" id="GO:0030267">
    <property type="term" value="F:glyoxylate reductase (NADPH) activity"/>
    <property type="evidence" value="ECO:0007669"/>
    <property type="project" value="UniProtKB-UniRule"/>
</dbReference>
<dbReference type="GO" id="GO:0008465">
    <property type="term" value="F:hydroxypyruvate reductase (NADH) activity"/>
    <property type="evidence" value="ECO:0007669"/>
    <property type="project" value="RHEA"/>
</dbReference>
<dbReference type="GO" id="GO:0120509">
    <property type="term" value="F:hydroxypyruvate reductase (NADPH) activity"/>
    <property type="evidence" value="ECO:0007669"/>
    <property type="project" value="RHEA"/>
</dbReference>
<dbReference type="GO" id="GO:0051287">
    <property type="term" value="F:NAD binding"/>
    <property type="evidence" value="ECO:0007669"/>
    <property type="project" value="InterPro"/>
</dbReference>
<dbReference type="CDD" id="cd12164">
    <property type="entry name" value="GDH_like_2"/>
    <property type="match status" value="1"/>
</dbReference>
<dbReference type="FunFam" id="3.40.50.720:FF:000110">
    <property type="entry name" value="Glyoxylate/hydroxypyruvate reductase A"/>
    <property type="match status" value="1"/>
</dbReference>
<dbReference type="Gene3D" id="3.40.50.720">
    <property type="entry name" value="NAD(P)-binding Rossmann-like Domain"/>
    <property type="match status" value="2"/>
</dbReference>
<dbReference type="HAMAP" id="MF_01666">
    <property type="entry name" value="2_Hacid_dh_C_GhrA"/>
    <property type="match status" value="1"/>
</dbReference>
<dbReference type="InterPro" id="IPR029753">
    <property type="entry name" value="D-isomer_DH_CS"/>
</dbReference>
<dbReference type="InterPro" id="IPR006140">
    <property type="entry name" value="D-isomer_DH_NAD-bd"/>
</dbReference>
<dbReference type="InterPro" id="IPR023514">
    <property type="entry name" value="GhrA_Enterobacterales"/>
</dbReference>
<dbReference type="InterPro" id="IPR036291">
    <property type="entry name" value="NAD(P)-bd_dom_sf"/>
</dbReference>
<dbReference type="NCBIfam" id="NF012013">
    <property type="entry name" value="PRK15469.1"/>
    <property type="match status" value="1"/>
</dbReference>
<dbReference type="PANTHER" id="PTHR43333">
    <property type="entry name" value="2-HACID_DH_C DOMAIN-CONTAINING PROTEIN"/>
    <property type="match status" value="1"/>
</dbReference>
<dbReference type="PANTHER" id="PTHR43333:SF1">
    <property type="entry name" value="D-ISOMER SPECIFIC 2-HYDROXYACID DEHYDROGENASE NAD-BINDING DOMAIN-CONTAINING PROTEIN"/>
    <property type="match status" value="1"/>
</dbReference>
<dbReference type="Pfam" id="PF02826">
    <property type="entry name" value="2-Hacid_dh_C"/>
    <property type="match status" value="1"/>
</dbReference>
<dbReference type="SUPFAM" id="SSF51735">
    <property type="entry name" value="NAD(P)-binding Rossmann-fold domains"/>
    <property type="match status" value="1"/>
</dbReference>
<dbReference type="PROSITE" id="PS00671">
    <property type="entry name" value="D_2_HYDROXYACID_DH_3"/>
    <property type="match status" value="1"/>
</dbReference>
<feature type="chain" id="PRO_1000187269" description="Glyoxylate/hydroxypyruvate reductase A">
    <location>
        <begin position="1"/>
        <end position="312"/>
    </location>
</feature>
<feature type="active site" evidence="1">
    <location>
        <position position="227"/>
    </location>
</feature>
<feature type="active site" description="Proton donor" evidence="1">
    <location>
        <position position="275"/>
    </location>
</feature>
<keyword id="KW-0963">Cytoplasm</keyword>
<keyword id="KW-0520">NAD</keyword>
<keyword id="KW-0521">NADP</keyword>
<keyword id="KW-0560">Oxidoreductase</keyword>
<organism>
    <name type="scientific">Escherichia coli O17:K52:H18 (strain UMN026 / ExPEC)</name>
    <dbReference type="NCBI Taxonomy" id="585056"/>
    <lineage>
        <taxon>Bacteria</taxon>
        <taxon>Pseudomonadati</taxon>
        <taxon>Pseudomonadota</taxon>
        <taxon>Gammaproteobacteria</taxon>
        <taxon>Enterobacterales</taxon>
        <taxon>Enterobacteriaceae</taxon>
        <taxon>Escherichia</taxon>
    </lineage>
</organism>
<sequence>MDIIFYHPTFDTQWWIEALRKAIPQARVRAWKSGDNDPADYALVWHPPVEMLAGRDLKAVFALGAGVDSILSKLKAHPEMLKPSVPLFRLEDTGMGEQMQEYAVSQVLHWFRRFDDYRIQQNSSHWQPLPEYHREDFTIGILGAGVLGSKVAQSLQTWRFPLRCWSRTRKSWSGVQSFAGREELSAFLSQCRVLINLLPNTPETVGIINQQLIEKLPDGAYLLNLARGVHVVEDDLLAALDSGKVKGAMLDVFNREPLPPESPLWLHPRVAITPHVAAITRPAEAVEYISRTIAQLEKGERVCGQVDRARGY</sequence>
<comment type="function">
    <text evidence="1">Catalyzes the NADPH-dependent reduction of glyoxylate and hydroxypyruvate into glycolate and glycerate, respectively.</text>
</comment>
<comment type="catalytic activity">
    <reaction evidence="1">
        <text>glycolate + NADP(+) = glyoxylate + NADPH + H(+)</text>
        <dbReference type="Rhea" id="RHEA:10992"/>
        <dbReference type="ChEBI" id="CHEBI:15378"/>
        <dbReference type="ChEBI" id="CHEBI:29805"/>
        <dbReference type="ChEBI" id="CHEBI:36655"/>
        <dbReference type="ChEBI" id="CHEBI:57783"/>
        <dbReference type="ChEBI" id="CHEBI:58349"/>
        <dbReference type="EC" id="1.1.1.79"/>
    </reaction>
</comment>
<comment type="catalytic activity">
    <reaction evidence="1">
        <text>(R)-glycerate + NAD(+) = 3-hydroxypyruvate + NADH + H(+)</text>
        <dbReference type="Rhea" id="RHEA:17905"/>
        <dbReference type="ChEBI" id="CHEBI:15378"/>
        <dbReference type="ChEBI" id="CHEBI:16659"/>
        <dbReference type="ChEBI" id="CHEBI:17180"/>
        <dbReference type="ChEBI" id="CHEBI:57540"/>
        <dbReference type="ChEBI" id="CHEBI:57945"/>
        <dbReference type="EC" id="1.1.1.81"/>
    </reaction>
</comment>
<comment type="catalytic activity">
    <reaction evidence="1">
        <text>(R)-glycerate + NADP(+) = 3-hydroxypyruvate + NADPH + H(+)</text>
        <dbReference type="Rhea" id="RHEA:18657"/>
        <dbReference type="ChEBI" id="CHEBI:15378"/>
        <dbReference type="ChEBI" id="CHEBI:16659"/>
        <dbReference type="ChEBI" id="CHEBI:17180"/>
        <dbReference type="ChEBI" id="CHEBI:57783"/>
        <dbReference type="ChEBI" id="CHEBI:58349"/>
        <dbReference type="EC" id="1.1.1.81"/>
    </reaction>
</comment>
<comment type="subcellular location">
    <subcellularLocation>
        <location evidence="1">Cytoplasm</location>
    </subcellularLocation>
</comment>
<comment type="similarity">
    <text evidence="1">Belongs to the D-isomer specific 2-hydroxyacid dehydrogenase family. GhrA subfamily.</text>
</comment>